<evidence type="ECO:0000255" key="1">
    <source>
        <dbReference type="HAMAP-Rule" id="MF_01302"/>
    </source>
</evidence>
<evidence type="ECO:0000305" key="2"/>
<organism>
    <name type="scientific">Bacillus cereus (strain 03BB102)</name>
    <dbReference type="NCBI Taxonomy" id="572264"/>
    <lineage>
        <taxon>Bacteria</taxon>
        <taxon>Bacillati</taxon>
        <taxon>Bacillota</taxon>
        <taxon>Bacilli</taxon>
        <taxon>Bacillales</taxon>
        <taxon>Bacillaceae</taxon>
        <taxon>Bacillus</taxon>
        <taxon>Bacillus cereus group</taxon>
    </lineage>
</organism>
<name>RS8_BACC3</name>
<comment type="function">
    <text evidence="1">One of the primary rRNA binding proteins, it binds directly to 16S rRNA central domain where it helps coordinate assembly of the platform of the 30S subunit.</text>
</comment>
<comment type="subunit">
    <text evidence="1">Part of the 30S ribosomal subunit. Contacts proteins S5 and S12.</text>
</comment>
<comment type="similarity">
    <text evidence="1">Belongs to the universal ribosomal protein uS8 family.</text>
</comment>
<gene>
    <name evidence="1" type="primary">rpsH</name>
    <name type="ordered locus">BCA_0153</name>
</gene>
<accession>C1ET53</accession>
<feature type="chain" id="PRO_1000165306" description="Small ribosomal subunit protein uS8">
    <location>
        <begin position="1"/>
        <end position="132"/>
    </location>
</feature>
<protein>
    <recommendedName>
        <fullName evidence="1">Small ribosomal subunit protein uS8</fullName>
    </recommendedName>
    <alternativeName>
        <fullName evidence="2">30S ribosomal protein S8</fullName>
    </alternativeName>
</protein>
<dbReference type="EMBL" id="CP001407">
    <property type="protein sequence ID" value="ACO31016.1"/>
    <property type="molecule type" value="Genomic_DNA"/>
</dbReference>
<dbReference type="RefSeq" id="WP_000245511.1">
    <property type="nucleotide sequence ID" value="NZ_CP009318.1"/>
</dbReference>
<dbReference type="SMR" id="C1ET53"/>
<dbReference type="GeneID" id="93010929"/>
<dbReference type="KEGG" id="bcx:BCA_0153"/>
<dbReference type="PATRIC" id="fig|572264.18.peg.188"/>
<dbReference type="Proteomes" id="UP000002210">
    <property type="component" value="Chromosome"/>
</dbReference>
<dbReference type="GO" id="GO:1990904">
    <property type="term" value="C:ribonucleoprotein complex"/>
    <property type="evidence" value="ECO:0007669"/>
    <property type="project" value="UniProtKB-KW"/>
</dbReference>
<dbReference type="GO" id="GO:0005840">
    <property type="term" value="C:ribosome"/>
    <property type="evidence" value="ECO:0007669"/>
    <property type="project" value="UniProtKB-KW"/>
</dbReference>
<dbReference type="GO" id="GO:0019843">
    <property type="term" value="F:rRNA binding"/>
    <property type="evidence" value="ECO:0007669"/>
    <property type="project" value="UniProtKB-UniRule"/>
</dbReference>
<dbReference type="GO" id="GO:0003735">
    <property type="term" value="F:structural constituent of ribosome"/>
    <property type="evidence" value="ECO:0007669"/>
    <property type="project" value="InterPro"/>
</dbReference>
<dbReference type="GO" id="GO:0006412">
    <property type="term" value="P:translation"/>
    <property type="evidence" value="ECO:0007669"/>
    <property type="project" value="UniProtKB-UniRule"/>
</dbReference>
<dbReference type="FunFam" id="3.30.1370.30:FF:000002">
    <property type="entry name" value="30S ribosomal protein S8"/>
    <property type="match status" value="1"/>
</dbReference>
<dbReference type="FunFam" id="3.30.1490.10:FF:000001">
    <property type="entry name" value="30S ribosomal protein S8"/>
    <property type="match status" value="1"/>
</dbReference>
<dbReference type="Gene3D" id="3.30.1370.30">
    <property type="match status" value="1"/>
</dbReference>
<dbReference type="Gene3D" id="3.30.1490.10">
    <property type="match status" value="1"/>
</dbReference>
<dbReference type="HAMAP" id="MF_01302_B">
    <property type="entry name" value="Ribosomal_uS8_B"/>
    <property type="match status" value="1"/>
</dbReference>
<dbReference type="InterPro" id="IPR000630">
    <property type="entry name" value="Ribosomal_uS8"/>
</dbReference>
<dbReference type="InterPro" id="IPR047863">
    <property type="entry name" value="Ribosomal_uS8_CS"/>
</dbReference>
<dbReference type="InterPro" id="IPR035987">
    <property type="entry name" value="Ribosomal_uS8_sf"/>
</dbReference>
<dbReference type="NCBIfam" id="NF001109">
    <property type="entry name" value="PRK00136.1"/>
    <property type="match status" value="1"/>
</dbReference>
<dbReference type="PANTHER" id="PTHR11758">
    <property type="entry name" value="40S RIBOSOMAL PROTEIN S15A"/>
    <property type="match status" value="1"/>
</dbReference>
<dbReference type="Pfam" id="PF00410">
    <property type="entry name" value="Ribosomal_S8"/>
    <property type="match status" value="1"/>
</dbReference>
<dbReference type="SUPFAM" id="SSF56047">
    <property type="entry name" value="Ribosomal protein S8"/>
    <property type="match status" value="1"/>
</dbReference>
<dbReference type="PROSITE" id="PS00053">
    <property type="entry name" value="RIBOSOMAL_S8"/>
    <property type="match status" value="1"/>
</dbReference>
<reference key="1">
    <citation type="submission" date="2009-02" db="EMBL/GenBank/DDBJ databases">
        <title>Genome sequence of Bacillus cereus 03BB102.</title>
        <authorList>
            <person name="Dodson R.J."/>
            <person name="Jackson P."/>
            <person name="Munk A.C."/>
            <person name="Brettin T."/>
            <person name="Bruce D."/>
            <person name="Detter C."/>
            <person name="Tapia R."/>
            <person name="Han C."/>
            <person name="Sutton G."/>
            <person name="Sims D."/>
        </authorList>
    </citation>
    <scope>NUCLEOTIDE SEQUENCE [LARGE SCALE GENOMIC DNA]</scope>
    <source>
        <strain>03BB102</strain>
    </source>
</reference>
<keyword id="KW-0687">Ribonucleoprotein</keyword>
<keyword id="KW-0689">Ribosomal protein</keyword>
<keyword id="KW-0694">RNA-binding</keyword>
<keyword id="KW-0699">rRNA-binding</keyword>
<proteinExistence type="inferred from homology"/>
<sequence length="132" mass="14882">MVMTDPIADMLTRIRNANMVRHEKLEVPASKIKKEIAELLKREGFIRDVEYIEDNKQGILRIFLKYGANNERVITGLKRISKPGLRVYAKADEVPRVLNGLGIALVSTSKGVMTDKDARQLQTGGEVVAYVW</sequence>